<sequence>MAEPRKSGLISHGIAAQNRKARFNYTIKDTVEAGIVLRGAEVKSLRMGRATLSEAFAGERDGEMYLFNMYIPEYQGGVLSRFDTKGPRKLLLKRKQIDQLLGAIARQGSTVVPLDVHFNPRGLAKVTLGIAEGRKQHDKRQAIAKRDWERDKARILKNR</sequence>
<organism>
    <name type="scientific">Acidiphilium cryptum (strain JF-5)</name>
    <dbReference type="NCBI Taxonomy" id="349163"/>
    <lineage>
        <taxon>Bacteria</taxon>
        <taxon>Pseudomonadati</taxon>
        <taxon>Pseudomonadota</taxon>
        <taxon>Alphaproteobacteria</taxon>
        <taxon>Acetobacterales</taxon>
        <taxon>Acidocellaceae</taxon>
        <taxon>Acidiphilium</taxon>
    </lineage>
</organism>
<keyword id="KW-0963">Cytoplasm</keyword>
<keyword id="KW-1185">Reference proteome</keyword>
<keyword id="KW-0694">RNA-binding</keyword>
<accession>A5FZS6</accession>
<gene>
    <name evidence="1" type="primary">smpB</name>
    <name type="ordered locus">Acry_1907</name>
</gene>
<protein>
    <recommendedName>
        <fullName evidence="1">SsrA-binding protein</fullName>
    </recommendedName>
    <alternativeName>
        <fullName evidence="1">Small protein B</fullName>
    </alternativeName>
</protein>
<feature type="chain" id="PRO_0000331013" description="SsrA-binding protein">
    <location>
        <begin position="1"/>
        <end position="159"/>
    </location>
</feature>
<name>SSRP_ACICJ</name>
<evidence type="ECO:0000255" key="1">
    <source>
        <dbReference type="HAMAP-Rule" id="MF_00023"/>
    </source>
</evidence>
<reference key="1">
    <citation type="submission" date="2007-05" db="EMBL/GenBank/DDBJ databases">
        <title>Complete sequence of chromosome of Acidiphilium cryptum JF-5.</title>
        <authorList>
            <consortium name="US DOE Joint Genome Institute"/>
            <person name="Copeland A."/>
            <person name="Lucas S."/>
            <person name="Lapidus A."/>
            <person name="Barry K."/>
            <person name="Detter J.C."/>
            <person name="Glavina del Rio T."/>
            <person name="Hammon N."/>
            <person name="Israni S."/>
            <person name="Dalin E."/>
            <person name="Tice H."/>
            <person name="Pitluck S."/>
            <person name="Sims D."/>
            <person name="Brettin T."/>
            <person name="Bruce D."/>
            <person name="Han C."/>
            <person name="Schmutz J."/>
            <person name="Larimer F."/>
            <person name="Land M."/>
            <person name="Hauser L."/>
            <person name="Kyrpides N."/>
            <person name="Kim E."/>
            <person name="Magnuson T."/>
            <person name="Richardson P."/>
        </authorList>
    </citation>
    <scope>NUCLEOTIDE SEQUENCE [LARGE SCALE GENOMIC DNA]</scope>
    <source>
        <strain>JF-5</strain>
    </source>
</reference>
<dbReference type="EMBL" id="CP000697">
    <property type="protein sequence ID" value="ABQ31108.1"/>
    <property type="molecule type" value="Genomic_DNA"/>
</dbReference>
<dbReference type="RefSeq" id="WP_007423391.1">
    <property type="nucleotide sequence ID" value="NC_009484.1"/>
</dbReference>
<dbReference type="SMR" id="A5FZS6"/>
<dbReference type="STRING" id="349163.Acry_1907"/>
<dbReference type="KEGG" id="acr:Acry_1907"/>
<dbReference type="eggNOG" id="COG0691">
    <property type="taxonomic scope" value="Bacteria"/>
</dbReference>
<dbReference type="HOGENOM" id="CLU_108953_0_1_5"/>
<dbReference type="Proteomes" id="UP000000245">
    <property type="component" value="Chromosome"/>
</dbReference>
<dbReference type="GO" id="GO:0005829">
    <property type="term" value="C:cytosol"/>
    <property type="evidence" value="ECO:0007669"/>
    <property type="project" value="TreeGrafter"/>
</dbReference>
<dbReference type="GO" id="GO:0003723">
    <property type="term" value="F:RNA binding"/>
    <property type="evidence" value="ECO:0007669"/>
    <property type="project" value="UniProtKB-UniRule"/>
</dbReference>
<dbReference type="GO" id="GO:0070929">
    <property type="term" value="P:trans-translation"/>
    <property type="evidence" value="ECO:0007669"/>
    <property type="project" value="UniProtKB-UniRule"/>
</dbReference>
<dbReference type="CDD" id="cd09294">
    <property type="entry name" value="SmpB"/>
    <property type="match status" value="1"/>
</dbReference>
<dbReference type="Gene3D" id="2.40.280.10">
    <property type="match status" value="1"/>
</dbReference>
<dbReference type="HAMAP" id="MF_00023">
    <property type="entry name" value="SmpB"/>
    <property type="match status" value="1"/>
</dbReference>
<dbReference type="InterPro" id="IPR023620">
    <property type="entry name" value="SmpB"/>
</dbReference>
<dbReference type="InterPro" id="IPR000037">
    <property type="entry name" value="SsrA-bd_prot"/>
</dbReference>
<dbReference type="InterPro" id="IPR020081">
    <property type="entry name" value="SsrA-bd_prot_CS"/>
</dbReference>
<dbReference type="NCBIfam" id="NF003843">
    <property type="entry name" value="PRK05422.1"/>
    <property type="match status" value="1"/>
</dbReference>
<dbReference type="NCBIfam" id="TIGR00086">
    <property type="entry name" value="smpB"/>
    <property type="match status" value="1"/>
</dbReference>
<dbReference type="PANTHER" id="PTHR30308:SF2">
    <property type="entry name" value="SSRA-BINDING PROTEIN"/>
    <property type="match status" value="1"/>
</dbReference>
<dbReference type="PANTHER" id="PTHR30308">
    <property type="entry name" value="TMRNA-BINDING COMPONENT OF TRANS-TRANSLATION TAGGING COMPLEX"/>
    <property type="match status" value="1"/>
</dbReference>
<dbReference type="Pfam" id="PF01668">
    <property type="entry name" value="SmpB"/>
    <property type="match status" value="1"/>
</dbReference>
<dbReference type="SUPFAM" id="SSF74982">
    <property type="entry name" value="Small protein B (SmpB)"/>
    <property type="match status" value="1"/>
</dbReference>
<dbReference type="PROSITE" id="PS01317">
    <property type="entry name" value="SSRP"/>
    <property type="match status" value="1"/>
</dbReference>
<comment type="function">
    <text evidence="1">Required for rescue of stalled ribosomes mediated by trans-translation. Binds to transfer-messenger RNA (tmRNA), required for stable association of tmRNA with ribosomes. tmRNA and SmpB together mimic tRNA shape, replacing the anticodon stem-loop with SmpB. tmRNA is encoded by the ssrA gene; the 2 termini fold to resemble tRNA(Ala) and it encodes a 'tag peptide', a short internal open reading frame. During trans-translation Ala-aminoacylated tmRNA acts like a tRNA, entering the A-site of stalled ribosomes, displacing the stalled mRNA. The ribosome then switches to translate the ORF on the tmRNA; the nascent peptide is terminated with the 'tag peptide' encoded by the tmRNA and targeted for degradation. The ribosome is freed to recommence translation, which seems to be the essential function of trans-translation.</text>
</comment>
<comment type="subcellular location">
    <subcellularLocation>
        <location evidence="1">Cytoplasm</location>
    </subcellularLocation>
    <text evidence="1">The tmRNA-SmpB complex associates with stalled 70S ribosomes.</text>
</comment>
<comment type="similarity">
    <text evidence="1">Belongs to the SmpB family.</text>
</comment>
<proteinExistence type="inferred from homology"/>